<feature type="chain" id="PRO_0000198618" description="Ribulose bisphosphate carboxylase small subunit">
    <location>
        <begin position="1"/>
        <end position="124"/>
    </location>
</feature>
<organism>
    <name type="scientific">Hydrogenophilus thermoluteolus</name>
    <name type="common">Pseudomonas hydrogenothermophila</name>
    <dbReference type="NCBI Taxonomy" id="297"/>
    <lineage>
        <taxon>Bacteria</taxon>
        <taxon>Pseudomonadati</taxon>
        <taxon>Pseudomonadota</taxon>
        <taxon>Hydrogenophilia</taxon>
        <taxon>Hydrogenophilales</taxon>
        <taxon>Hydrogenophilaceae</taxon>
        <taxon>Hydrogenophilus</taxon>
    </lineage>
</organism>
<gene>
    <name evidence="1" type="primary">cbbS</name>
</gene>
<keyword id="KW-0113">Calvin cycle</keyword>
<keyword id="KW-0120">Carbon dioxide fixation</keyword>
<proteinExistence type="inferred from homology"/>
<comment type="function">
    <text evidence="1">RuBisCO catalyzes two reactions: the carboxylation of D-ribulose 1,5-bisphosphate, the primary event in carbon dioxide fixation, as well as the oxidative fragmentation of the pentose substrate. Both reactions occur simultaneously and in competition at the same active site. Although the small subunit is not catalytic it is essential for maximal activity.</text>
</comment>
<comment type="subunit">
    <text evidence="1">Heterohexadecamer of 8 large and 8 small subunits.</text>
</comment>
<comment type="miscellaneous">
    <text evidence="1">The basic functional RuBisCO is composed of a large chain homodimer in a 'head-to-tail' conformation. In form I RuBisCO this homodimer is arranged in a barrel-like tetramer with the small subunits forming a tetrameric 'cap' on each end of the 'barrel'.</text>
</comment>
<comment type="similarity">
    <text evidence="1">Belongs to the RuBisCO small chain family.</text>
</comment>
<reference key="1">
    <citation type="journal article" date="1995" name="Gene">
        <title>Genes encoding RubisCO in Pseudomonas hydrogenothermophila are followed by a novel cbbQ gene similar to nirQ of the denitrification gene cluster from Pseudomonas species.</title>
        <authorList>
            <person name="Yokoyama K."/>
            <person name="Hayashi N.R."/>
            <person name="Arai H."/>
            <person name="Chung S.Y."/>
            <person name="Igarashi Y."/>
            <person name="Kodama T."/>
        </authorList>
    </citation>
    <scope>NUCLEOTIDE SEQUENCE [GENOMIC DNA]</scope>
    <source>
        <strain>TH-1 / NBRC 14978</strain>
    </source>
</reference>
<accession>Q51857</accession>
<sequence length="124" mass="14656">MSETQDMIRDVQDYPSRLNDPKSKRFETFSYLPQMSAEEIRKQIEYIVSKGWNPAIEHCEPENAILHYWYMWKLPMFGETDVDKIIAEIEACKRSNPNHLIKLIGYDNIRQTQGTAMLVYRPAQ</sequence>
<dbReference type="EMBL" id="D30764">
    <property type="protein sequence ID" value="BAA06438.1"/>
    <property type="molecule type" value="Genomic_DNA"/>
</dbReference>
<dbReference type="SMR" id="Q51857"/>
<dbReference type="GO" id="GO:0016984">
    <property type="term" value="F:ribulose-bisphosphate carboxylase activity"/>
    <property type="evidence" value="ECO:0007669"/>
    <property type="project" value="UniProtKB-UniRule"/>
</dbReference>
<dbReference type="GO" id="GO:0019253">
    <property type="term" value="P:reductive pentose-phosphate cycle"/>
    <property type="evidence" value="ECO:0007669"/>
    <property type="project" value="UniProtKB-UniRule"/>
</dbReference>
<dbReference type="CDD" id="cd03527">
    <property type="entry name" value="RuBisCO_small"/>
    <property type="match status" value="1"/>
</dbReference>
<dbReference type="Gene3D" id="3.30.190.10">
    <property type="entry name" value="Ribulose bisphosphate carboxylase, small subunit"/>
    <property type="match status" value="1"/>
</dbReference>
<dbReference type="HAMAP" id="MF_00859">
    <property type="entry name" value="RuBisCO_S_bact"/>
    <property type="match status" value="1"/>
</dbReference>
<dbReference type="InterPro" id="IPR024681">
    <property type="entry name" value="RuBisCO_ssu"/>
</dbReference>
<dbReference type="InterPro" id="IPR000894">
    <property type="entry name" value="RuBisCO_ssu_dom"/>
</dbReference>
<dbReference type="InterPro" id="IPR036385">
    <property type="entry name" value="RuBisCO_ssu_sf"/>
</dbReference>
<dbReference type="PANTHER" id="PTHR31262">
    <property type="entry name" value="RIBULOSE BISPHOSPHATE CARBOXYLASE SMALL CHAIN 1, CHLOROPLASTIC"/>
    <property type="match status" value="1"/>
</dbReference>
<dbReference type="Pfam" id="PF00101">
    <property type="entry name" value="RuBisCO_small"/>
    <property type="match status" value="1"/>
</dbReference>
<dbReference type="SMART" id="SM00961">
    <property type="entry name" value="RuBisCO_small"/>
    <property type="match status" value="1"/>
</dbReference>
<dbReference type="SUPFAM" id="SSF55239">
    <property type="entry name" value="RuBisCO, small subunit"/>
    <property type="match status" value="1"/>
</dbReference>
<name>RBS_HYDTE</name>
<protein>
    <recommendedName>
        <fullName evidence="1">Ribulose bisphosphate carboxylase small subunit</fullName>
        <shortName evidence="1">RuBisCO small subunit</shortName>
    </recommendedName>
</protein>
<evidence type="ECO:0000255" key="1">
    <source>
        <dbReference type="HAMAP-Rule" id="MF_00859"/>
    </source>
</evidence>